<evidence type="ECO:0000255" key="1"/>
<evidence type="ECO:0000305" key="2"/>
<accession>P36965</accession>
<sequence length="246" mass="26806">MGCFECCIKCLGGVPYASLLATILCFSGVALFCGCGHVALTKVERIVQLYFSNNASDHVLLTDVIQMMHYVIYGVASFSFLYGIILLAEGFYTTSAVKEIHGEFKTTVCGRCISGMSVFLTYLLGIAWLGVFGFSAVPAFIYYNMWSACQTISSPPVNLTTVIEEICVDVRQYGIIPWNASPGKACGSTLTTICNTSEFDLSYHLFIVACAGAGATVIALLIYMMATTYNFAVLKFKSREDCCTKF</sequence>
<proteinExistence type="evidence at transcript level"/>
<feature type="chain" id="PRO_0000159017" description="Proteolipid protein DM gamma">
    <location>
        <begin position="1"/>
        <end position="246"/>
    </location>
</feature>
<feature type="transmembrane region" description="Helical" evidence="1">
    <location>
        <begin position="19"/>
        <end position="35"/>
    </location>
</feature>
<feature type="transmembrane region" description="Helical" evidence="1">
    <location>
        <begin position="71"/>
        <end position="87"/>
    </location>
</feature>
<feature type="transmembrane region" description="Helical" evidence="1">
    <location>
        <begin position="118"/>
        <end position="134"/>
    </location>
</feature>
<feature type="transmembrane region" description="Helical" evidence="1">
    <location>
        <begin position="206"/>
        <end position="222"/>
    </location>
</feature>
<name>DMG_SQUAC</name>
<keyword id="KW-0472">Membrane</keyword>
<keyword id="KW-0812">Transmembrane</keyword>
<keyword id="KW-1133">Transmembrane helix</keyword>
<reference key="1">
    <citation type="journal article" date="1993" name="Neuron">
        <title>A proteolipid protein gene family: expression in sharks and rays and possible evolution from an ancestral gene encoding a pore-forming polypeptide.</title>
        <authorList>
            <person name="Kitagawa K."/>
            <person name="Sinoway M.P."/>
            <person name="Yang C."/>
            <person name="Gould R.M."/>
            <person name="Colman D.R."/>
        </authorList>
    </citation>
    <scope>NUCLEOTIDE SEQUENCE [MRNA]</scope>
    <source>
        <tissue>Brain</tissue>
    </source>
</reference>
<organism>
    <name type="scientific">Squalus acanthias</name>
    <name type="common">Spiny dogfish</name>
    <dbReference type="NCBI Taxonomy" id="7797"/>
    <lineage>
        <taxon>Eukaryota</taxon>
        <taxon>Metazoa</taxon>
        <taxon>Chordata</taxon>
        <taxon>Craniata</taxon>
        <taxon>Vertebrata</taxon>
        <taxon>Chondrichthyes</taxon>
        <taxon>Elasmobranchii</taxon>
        <taxon>Squalomorphii</taxon>
        <taxon>Squaliformes</taxon>
        <taxon>Squalidae</taxon>
        <taxon>Squalus</taxon>
    </lineage>
</organism>
<dbReference type="EMBL" id="U02975">
    <property type="protein sequence ID" value="AAC59641.1"/>
    <property type="molecule type" value="mRNA"/>
</dbReference>
<dbReference type="PIR" id="I51325">
    <property type="entry name" value="I51325"/>
</dbReference>
<dbReference type="GO" id="GO:0045121">
    <property type="term" value="C:membrane raft"/>
    <property type="evidence" value="ECO:0007669"/>
    <property type="project" value="TreeGrafter"/>
</dbReference>
<dbReference type="GO" id="GO:0043209">
    <property type="term" value="C:myelin sheath"/>
    <property type="evidence" value="ECO:0007669"/>
    <property type="project" value="TreeGrafter"/>
</dbReference>
<dbReference type="GO" id="GO:0005886">
    <property type="term" value="C:plasma membrane"/>
    <property type="evidence" value="ECO:0007669"/>
    <property type="project" value="TreeGrafter"/>
</dbReference>
<dbReference type="GO" id="GO:0019911">
    <property type="term" value="F:structural constituent of myelin sheath"/>
    <property type="evidence" value="ECO:0007669"/>
    <property type="project" value="TreeGrafter"/>
</dbReference>
<dbReference type="GO" id="GO:0061564">
    <property type="term" value="P:axon development"/>
    <property type="evidence" value="ECO:0007669"/>
    <property type="project" value="TreeGrafter"/>
</dbReference>
<dbReference type="GO" id="GO:0022010">
    <property type="term" value="P:central nervous system myelination"/>
    <property type="evidence" value="ECO:0007669"/>
    <property type="project" value="TreeGrafter"/>
</dbReference>
<dbReference type="GO" id="GO:0051612">
    <property type="term" value="P:negative regulation of serotonin uptake"/>
    <property type="evidence" value="ECO:0007669"/>
    <property type="project" value="TreeGrafter"/>
</dbReference>
<dbReference type="InterPro" id="IPR001614">
    <property type="entry name" value="Myelin_PLP"/>
</dbReference>
<dbReference type="InterPro" id="IPR018237">
    <property type="entry name" value="Myelin_PLP_CS"/>
</dbReference>
<dbReference type="PANTHER" id="PTHR11683">
    <property type="entry name" value="MYELIN PROTEOLIPID"/>
    <property type="match status" value="1"/>
</dbReference>
<dbReference type="PANTHER" id="PTHR11683:SF10">
    <property type="entry name" value="NEURONAL MEMBRANE GLYCOPROTEIN M6-B"/>
    <property type="match status" value="1"/>
</dbReference>
<dbReference type="Pfam" id="PF01275">
    <property type="entry name" value="Myelin_PLP"/>
    <property type="match status" value="1"/>
</dbReference>
<dbReference type="PRINTS" id="PR00214">
    <property type="entry name" value="MYELINPLP"/>
</dbReference>
<dbReference type="SMART" id="SM00002">
    <property type="entry name" value="PLP"/>
    <property type="match status" value="1"/>
</dbReference>
<dbReference type="PROSITE" id="PS00575">
    <property type="entry name" value="MYELIN_PLP_1"/>
    <property type="match status" value="1"/>
</dbReference>
<dbReference type="PROSITE" id="PS01004">
    <property type="entry name" value="MYELIN_PLP_2"/>
    <property type="match status" value="1"/>
</dbReference>
<comment type="subcellular location">
    <subcellularLocation>
        <location evidence="2">Membrane</location>
        <topology evidence="2">Multi-pass membrane protein</topology>
    </subcellularLocation>
</comment>
<comment type="tissue specificity">
    <text>Highly expressed in white matter in myelinating shark brain.</text>
</comment>
<comment type="similarity">
    <text evidence="2">Belongs to the myelin proteolipid protein family.</text>
</comment>
<protein>
    <recommendedName>
        <fullName>Proteolipid protein DM gamma</fullName>
    </recommendedName>
</protein>